<protein>
    <recommendedName>
        <fullName evidence="11">Dedicator of cytokinesis protein 10</fullName>
    </recommendedName>
    <alternativeName>
        <fullName>Zizimin-3</fullName>
    </alternativeName>
</protein>
<dbReference type="EMBL" id="AB014594">
    <property type="protein sequence ID" value="BAA31669.2"/>
    <property type="status" value="ALT_INIT"/>
    <property type="molecule type" value="mRNA"/>
</dbReference>
<dbReference type="EMBL" id="EU236710">
    <property type="protein sequence ID" value="ABY70713.2"/>
    <property type="molecule type" value="mRNA"/>
</dbReference>
<dbReference type="EMBL" id="AC011739">
    <property type="status" value="NOT_ANNOTATED_CDS"/>
    <property type="molecule type" value="Genomic_DNA"/>
</dbReference>
<dbReference type="EMBL" id="AC017095">
    <property type="status" value="NOT_ANNOTATED_CDS"/>
    <property type="molecule type" value="Genomic_DNA"/>
</dbReference>
<dbReference type="EMBL" id="AC093806">
    <property type="status" value="NOT_ANNOTATED_CDS"/>
    <property type="molecule type" value="Genomic_DNA"/>
</dbReference>
<dbReference type="EMBL" id="BC015018">
    <property type="protein sequence ID" value="AAH15018.1"/>
    <property type="status" value="ALT_INIT"/>
    <property type="molecule type" value="mRNA"/>
</dbReference>
<dbReference type="EMBL" id="AK000227">
    <property type="protein sequence ID" value="BAA91022.1"/>
    <property type="status" value="ALT_FRAME"/>
    <property type="molecule type" value="mRNA"/>
</dbReference>
<dbReference type="EMBL" id="AK001253">
    <property type="protein sequence ID" value="BAA91583.1"/>
    <property type="status" value="ALT_INIT"/>
    <property type="molecule type" value="mRNA"/>
</dbReference>
<dbReference type="EMBL" id="CR749492">
    <property type="protein sequence ID" value="CAH18316.1"/>
    <property type="status" value="ALT_INIT"/>
    <property type="molecule type" value="mRNA"/>
</dbReference>
<dbReference type="CCDS" id="CCDS46528.1">
    <molecule id="Q96BY6-1"/>
</dbReference>
<dbReference type="CCDS" id="CCDS74661.1">
    <molecule id="Q96BY6-3"/>
</dbReference>
<dbReference type="RefSeq" id="NP_001277192.1">
    <molecule id="Q96BY6-3"/>
    <property type="nucleotide sequence ID" value="NM_001290263.2"/>
</dbReference>
<dbReference type="RefSeq" id="NP_055504.2">
    <molecule id="Q96BY6-1"/>
    <property type="nucleotide sequence ID" value="NM_014689.3"/>
</dbReference>
<dbReference type="PDB" id="6TKY">
    <property type="method" value="X-ray"/>
    <property type="resolution" value="2.55 A"/>
    <property type="chains" value="A=1694-2151, B=1694-2150"/>
</dbReference>
<dbReference type="PDB" id="6TKZ">
    <property type="method" value="X-ray"/>
    <property type="resolution" value="2.64 A"/>
    <property type="chains" value="A/B=1694-2151"/>
</dbReference>
<dbReference type="PDB" id="6TM1">
    <property type="method" value="X-ray"/>
    <property type="resolution" value="3.71 A"/>
    <property type="chains" value="B=1694-2150, C=1694-2151"/>
</dbReference>
<dbReference type="PDB" id="7Q43">
    <property type="method" value="X-ray"/>
    <property type="resolution" value="2.40 A"/>
    <property type="chains" value="B/D/F=146-170"/>
</dbReference>
<dbReference type="PDBsum" id="6TKY"/>
<dbReference type="PDBsum" id="6TKZ"/>
<dbReference type="PDBsum" id="6TM1"/>
<dbReference type="PDBsum" id="7Q43"/>
<dbReference type="SMR" id="Q96BY6"/>
<dbReference type="BioGRID" id="120758">
    <property type="interactions" value="24"/>
</dbReference>
<dbReference type="FunCoup" id="Q96BY6">
    <property type="interactions" value="2479"/>
</dbReference>
<dbReference type="IntAct" id="Q96BY6">
    <property type="interactions" value="11"/>
</dbReference>
<dbReference type="MINT" id="Q96BY6"/>
<dbReference type="STRING" id="9606.ENSP00000493664"/>
<dbReference type="GlyCosmos" id="Q96BY6">
    <property type="glycosylation" value="1 site, 1 glycan"/>
</dbReference>
<dbReference type="GlyGen" id="Q96BY6">
    <property type="glycosylation" value="3 sites, 1 O-linked glycan (3 sites)"/>
</dbReference>
<dbReference type="iPTMnet" id="Q96BY6"/>
<dbReference type="PhosphoSitePlus" id="Q96BY6"/>
<dbReference type="SwissPalm" id="Q96BY6"/>
<dbReference type="BioMuta" id="DOCK10"/>
<dbReference type="DMDM" id="332278210"/>
<dbReference type="jPOST" id="Q96BY6"/>
<dbReference type="MassIVE" id="Q96BY6"/>
<dbReference type="PaxDb" id="9606-ENSP00000258390"/>
<dbReference type="PeptideAtlas" id="Q96BY6"/>
<dbReference type="ProteomicsDB" id="3476"/>
<dbReference type="ProteomicsDB" id="76127">
    <molecule id="Q96BY6-1"/>
</dbReference>
<dbReference type="ProteomicsDB" id="76128">
    <molecule id="Q96BY6-2"/>
</dbReference>
<dbReference type="Pumba" id="Q96BY6"/>
<dbReference type="Antibodypedia" id="34369">
    <property type="antibodies" value="57 antibodies from 15 providers"/>
</dbReference>
<dbReference type="DNASU" id="55619"/>
<dbReference type="Ensembl" id="ENST00000258390.12">
    <molecule id="Q96BY6-1"/>
    <property type="protein sequence ID" value="ENSP00000258390.7"/>
    <property type="gene ID" value="ENSG00000135905.21"/>
</dbReference>
<dbReference type="Ensembl" id="ENST00000409592.7">
    <molecule id="Q96BY6-3"/>
    <property type="protein sequence ID" value="ENSP00000386694.3"/>
    <property type="gene ID" value="ENSG00000135905.21"/>
</dbReference>
<dbReference type="GeneID" id="55619"/>
<dbReference type="KEGG" id="hsa:55619"/>
<dbReference type="MANE-Select" id="ENST00000258390.12">
    <property type="protein sequence ID" value="ENSP00000258390.7"/>
    <property type="RefSeq nucleotide sequence ID" value="NM_014689.3"/>
    <property type="RefSeq protein sequence ID" value="NP_055504.2"/>
</dbReference>
<dbReference type="UCSC" id="uc002vob.3">
    <molecule id="Q96BY6-1"/>
    <property type="organism name" value="human"/>
</dbReference>
<dbReference type="AGR" id="HGNC:23479"/>
<dbReference type="CTD" id="55619"/>
<dbReference type="DisGeNET" id="55619"/>
<dbReference type="GeneCards" id="DOCK10"/>
<dbReference type="HGNC" id="HGNC:23479">
    <property type="gene designation" value="DOCK10"/>
</dbReference>
<dbReference type="HPA" id="ENSG00000135905">
    <property type="expression patterns" value="Tissue enhanced (brain, lymphoid tissue)"/>
</dbReference>
<dbReference type="MIM" id="611518">
    <property type="type" value="gene"/>
</dbReference>
<dbReference type="neXtProt" id="NX_Q96BY6"/>
<dbReference type="OpenTargets" id="ENSG00000135905"/>
<dbReference type="PharmGKB" id="PA134983197"/>
<dbReference type="VEuPathDB" id="HostDB:ENSG00000135905"/>
<dbReference type="eggNOG" id="KOG1997">
    <property type="taxonomic scope" value="Eukaryota"/>
</dbReference>
<dbReference type="GeneTree" id="ENSGT00940000157469"/>
<dbReference type="HOGENOM" id="CLU_000624_1_0_1"/>
<dbReference type="InParanoid" id="Q96BY6"/>
<dbReference type="OMA" id="RACNTPP"/>
<dbReference type="OrthoDB" id="47328at2759"/>
<dbReference type="PAN-GO" id="Q96BY6">
    <property type="GO annotations" value="4 GO annotations based on evolutionary models"/>
</dbReference>
<dbReference type="PhylomeDB" id="Q96BY6"/>
<dbReference type="TreeFam" id="TF313629"/>
<dbReference type="PathwayCommons" id="Q96BY6"/>
<dbReference type="Reactome" id="R-HSA-9013148">
    <property type="pathway name" value="CDC42 GTPase cycle"/>
</dbReference>
<dbReference type="Reactome" id="R-HSA-9013149">
    <property type="pathway name" value="RAC1 GTPase cycle"/>
</dbReference>
<dbReference type="Reactome" id="R-HSA-9013404">
    <property type="pathway name" value="RAC2 GTPase cycle"/>
</dbReference>
<dbReference type="Reactome" id="R-HSA-9013423">
    <property type="pathway name" value="RAC3 GTPase cycle"/>
</dbReference>
<dbReference type="Reactome" id="R-HSA-983231">
    <property type="pathway name" value="Factors involved in megakaryocyte development and platelet production"/>
</dbReference>
<dbReference type="SignaLink" id="Q96BY6"/>
<dbReference type="SIGNOR" id="Q96BY6"/>
<dbReference type="BioGRID-ORCS" id="55619">
    <property type="hits" value="23 hits in 1150 CRISPR screens"/>
</dbReference>
<dbReference type="CD-CODE" id="FB4E32DD">
    <property type="entry name" value="Presynaptic clusters and postsynaptic densities"/>
</dbReference>
<dbReference type="ChiTaRS" id="DOCK10">
    <property type="organism name" value="human"/>
</dbReference>
<dbReference type="GeneWiki" id="Dock10"/>
<dbReference type="GenomeRNAi" id="55619"/>
<dbReference type="Pharos" id="Q96BY6">
    <property type="development level" value="Tbio"/>
</dbReference>
<dbReference type="PRO" id="PR:Q96BY6"/>
<dbReference type="Proteomes" id="UP000005640">
    <property type="component" value="Chromosome 2"/>
</dbReference>
<dbReference type="RNAct" id="Q96BY6">
    <property type="molecule type" value="protein"/>
</dbReference>
<dbReference type="Bgee" id="ENSG00000135905">
    <property type="expression patterns" value="Expressed in corpus callosum and 164 other cell types or tissues"/>
</dbReference>
<dbReference type="ExpressionAtlas" id="Q96BY6">
    <property type="expression patterns" value="baseline and differential"/>
</dbReference>
<dbReference type="GO" id="GO:0005737">
    <property type="term" value="C:cytoplasm"/>
    <property type="evidence" value="ECO:0000314"/>
    <property type="project" value="UniProtKB"/>
</dbReference>
<dbReference type="GO" id="GO:0005829">
    <property type="term" value="C:cytosol"/>
    <property type="evidence" value="ECO:0000314"/>
    <property type="project" value="HPA"/>
</dbReference>
<dbReference type="GO" id="GO:0043197">
    <property type="term" value="C:dendritic spine"/>
    <property type="evidence" value="ECO:0000250"/>
    <property type="project" value="UniProtKB"/>
</dbReference>
<dbReference type="GO" id="GO:0070062">
    <property type="term" value="C:extracellular exosome"/>
    <property type="evidence" value="ECO:0007005"/>
    <property type="project" value="UniProtKB"/>
</dbReference>
<dbReference type="GO" id="GO:0098978">
    <property type="term" value="C:glutamatergic synapse"/>
    <property type="evidence" value="ECO:0007669"/>
    <property type="project" value="Ensembl"/>
</dbReference>
<dbReference type="GO" id="GO:0016020">
    <property type="term" value="C:membrane"/>
    <property type="evidence" value="ECO:0007005"/>
    <property type="project" value="UniProtKB"/>
</dbReference>
<dbReference type="GO" id="GO:0005654">
    <property type="term" value="C:nucleoplasm"/>
    <property type="evidence" value="ECO:0000314"/>
    <property type="project" value="HPA"/>
</dbReference>
<dbReference type="GO" id="GO:0005634">
    <property type="term" value="C:nucleus"/>
    <property type="evidence" value="ECO:0000314"/>
    <property type="project" value="UniProtKB"/>
</dbReference>
<dbReference type="GO" id="GO:0005085">
    <property type="term" value="F:guanyl-nucleotide exchange factor activity"/>
    <property type="evidence" value="ECO:0000250"/>
    <property type="project" value="UniProtKB"/>
</dbReference>
<dbReference type="GO" id="GO:0031267">
    <property type="term" value="F:small GTPase binding"/>
    <property type="evidence" value="ECO:0007669"/>
    <property type="project" value="Ensembl"/>
</dbReference>
<dbReference type="GO" id="GO:0001782">
    <property type="term" value="P:B cell homeostasis"/>
    <property type="evidence" value="ECO:0000250"/>
    <property type="project" value="UniProtKB"/>
</dbReference>
<dbReference type="GO" id="GO:0060997">
    <property type="term" value="P:dendritic spine morphogenesis"/>
    <property type="evidence" value="ECO:0000250"/>
    <property type="project" value="UniProtKB"/>
</dbReference>
<dbReference type="GO" id="GO:0002315">
    <property type="term" value="P:marginal zone B cell differentiation"/>
    <property type="evidence" value="ECO:0000250"/>
    <property type="project" value="UniProtKB"/>
</dbReference>
<dbReference type="GO" id="GO:0043547">
    <property type="term" value="P:positive regulation of GTPase activity"/>
    <property type="evidence" value="ECO:0000250"/>
    <property type="project" value="UniProtKB"/>
</dbReference>
<dbReference type="GO" id="GO:0030334">
    <property type="term" value="P:regulation of cell migration"/>
    <property type="evidence" value="ECO:0000314"/>
    <property type="project" value="UniProtKB"/>
</dbReference>
<dbReference type="GO" id="GO:0150052">
    <property type="term" value="P:regulation of postsynapse assembly"/>
    <property type="evidence" value="ECO:0007669"/>
    <property type="project" value="Ensembl"/>
</dbReference>
<dbReference type="GO" id="GO:0035023">
    <property type="term" value="P:regulation of Rho protein signal transduction"/>
    <property type="evidence" value="ECO:0000318"/>
    <property type="project" value="GO_Central"/>
</dbReference>
<dbReference type="GO" id="GO:0007264">
    <property type="term" value="P:small GTPase-mediated signal transduction"/>
    <property type="evidence" value="ECO:0007669"/>
    <property type="project" value="InterPro"/>
</dbReference>
<dbReference type="CDD" id="cd08697">
    <property type="entry name" value="C2_Dock-D"/>
    <property type="match status" value="1"/>
</dbReference>
<dbReference type="CDD" id="cd11699">
    <property type="entry name" value="DHR2_DOCK10"/>
    <property type="match status" value="1"/>
</dbReference>
<dbReference type="CDD" id="cd13267">
    <property type="entry name" value="PH_DOCK-D"/>
    <property type="match status" value="1"/>
</dbReference>
<dbReference type="FunFam" id="1.20.58.740:FF:000001">
    <property type="entry name" value="dedicator of cytokinesis protein 9 isoform X1"/>
    <property type="match status" value="1"/>
</dbReference>
<dbReference type="FunFam" id="2.30.29.30:FF:000016">
    <property type="entry name" value="dedicator of cytokinesis protein 9 isoform X1"/>
    <property type="match status" value="1"/>
</dbReference>
<dbReference type="FunFam" id="2.60.40.150:FF:000015">
    <property type="entry name" value="dedicator of cytokinesis protein 9 isoform X1"/>
    <property type="match status" value="1"/>
</dbReference>
<dbReference type="Gene3D" id="1.20.58.740">
    <property type="match status" value="1"/>
</dbReference>
<dbReference type="Gene3D" id="1.25.40.410">
    <property type="match status" value="1"/>
</dbReference>
<dbReference type="Gene3D" id="2.60.40.150">
    <property type="entry name" value="C2 domain"/>
    <property type="match status" value="1"/>
</dbReference>
<dbReference type="Gene3D" id="2.30.29.30">
    <property type="entry name" value="Pleckstrin-homology domain (PH domain)/Phosphotyrosine-binding domain (PTB)"/>
    <property type="match status" value="1"/>
</dbReference>
<dbReference type="InterPro" id="IPR037809">
    <property type="entry name" value="C2_Dock-D"/>
</dbReference>
<dbReference type="InterPro" id="IPR027007">
    <property type="entry name" value="C2_DOCK-type_domain"/>
</dbReference>
<dbReference type="InterPro" id="IPR035892">
    <property type="entry name" value="C2_domain_sf"/>
</dbReference>
<dbReference type="InterPro" id="IPR026791">
    <property type="entry name" value="DOCK"/>
</dbReference>
<dbReference type="InterPro" id="IPR021816">
    <property type="entry name" value="DOCK_C/D_N"/>
</dbReference>
<dbReference type="InterPro" id="IPR043161">
    <property type="entry name" value="DOCK_C_lobe_A"/>
</dbReference>
<dbReference type="InterPro" id="IPR043162">
    <property type="entry name" value="DOCK_C_lobe_C"/>
</dbReference>
<dbReference type="InterPro" id="IPR027357">
    <property type="entry name" value="DOCKER_dom"/>
</dbReference>
<dbReference type="InterPro" id="IPR046769">
    <property type="entry name" value="DOCKER_Lobe_A"/>
</dbReference>
<dbReference type="InterPro" id="IPR046770">
    <property type="entry name" value="DOCKER_Lobe_B"/>
</dbReference>
<dbReference type="InterPro" id="IPR046773">
    <property type="entry name" value="DOCKER_Lobe_C"/>
</dbReference>
<dbReference type="InterPro" id="IPR011993">
    <property type="entry name" value="PH-like_dom_sf"/>
</dbReference>
<dbReference type="InterPro" id="IPR001849">
    <property type="entry name" value="PH_domain"/>
</dbReference>
<dbReference type="PANTHER" id="PTHR23317">
    <property type="entry name" value="DEDICATOR OF CYTOKINESIS DOCK"/>
    <property type="match status" value="1"/>
</dbReference>
<dbReference type="PANTHER" id="PTHR23317:SF71">
    <property type="entry name" value="DEDICATOR OF CYTOKINESIS PROTEIN 10"/>
    <property type="match status" value="1"/>
</dbReference>
<dbReference type="Pfam" id="PF06920">
    <property type="entry name" value="DHR-2_Lobe_A"/>
    <property type="match status" value="1"/>
</dbReference>
<dbReference type="Pfam" id="PF20422">
    <property type="entry name" value="DHR-2_Lobe_B"/>
    <property type="match status" value="1"/>
</dbReference>
<dbReference type="Pfam" id="PF20421">
    <property type="entry name" value="DHR-2_Lobe_C"/>
    <property type="match status" value="1"/>
</dbReference>
<dbReference type="Pfam" id="PF14429">
    <property type="entry name" value="DOCK-C2"/>
    <property type="match status" value="1"/>
</dbReference>
<dbReference type="Pfam" id="PF11878">
    <property type="entry name" value="DOCK_C-D_N"/>
    <property type="match status" value="1"/>
</dbReference>
<dbReference type="Pfam" id="PF00169">
    <property type="entry name" value="PH"/>
    <property type="match status" value="1"/>
</dbReference>
<dbReference type="SMART" id="SM00233">
    <property type="entry name" value="PH"/>
    <property type="match status" value="1"/>
</dbReference>
<dbReference type="SUPFAM" id="SSF50729">
    <property type="entry name" value="PH domain-like"/>
    <property type="match status" value="1"/>
</dbReference>
<dbReference type="PROSITE" id="PS51650">
    <property type="entry name" value="C2_DOCK"/>
    <property type="match status" value="1"/>
</dbReference>
<dbReference type="PROSITE" id="PS51651">
    <property type="entry name" value="DOCKER"/>
    <property type="match status" value="1"/>
</dbReference>
<dbReference type="PROSITE" id="PS50003">
    <property type="entry name" value="PH_DOMAIN"/>
    <property type="match status" value="1"/>
</dbReference>
<proteinExistence type="evidence at protein level"/>
<accession>Q96BY6</accession>
<accession>B3FL70</accession>
<accession>O75178</accession>
<accession>Q68DA4</accession>
<accession>Q9NW06</accession>
<accession>Q9NXI8</accession>
<reference key="1">
    <citation type="journal article" date="1998" name="DNA Res.">
        <title>Prediction of the coding sequences of unidentified human genes. X. The complete sequences of 100 new cDNA clones from brain which can code for large proteins in vitro.</title>
        <authorList>
            <person name="Ishikawa K."/>
            <person name="Nagase T."/>
            <person name="Suyama M."/>
            <person name="Miyajima N."/>
            <person name="Tanaka A."/>
            <person name="Kotani H."/>
            <person name="Nomura N."/>
            <person name="Ohara O."/>
        </authorList>
    </citation>
    <scope>NUCLEOTIDE SEQUENCE [LARGE SCALE MRNA] (ISOFORM 2)</scope>
    <scope>TISSUE SPECIFICITY</scope>
    <source>
        <tissue>Brain</tissue>
    </source>
</reference>
<reference key="2">
    <citation type="journal article" date="2002" name="DNA Res.">
        <title>Construction of expression-ready cDNA clones for KIAA genes: manual curation of 330 KIAA cDNA clones.</title>
        <authorList>
            <person name="Nakajima D."/>
            <person name="Okazaki N."/>
            <person name="Yamakawa H."/>
            <person name="Kikuno R."/>
            <person name="Ohara O."/>
            <person name="Nagase T."/>
        </authorList>
    </citation>
    <scope>SEQUENCE REVISION</scope>
</reference>
<reference key="3">
    <citation type="journal article" date="2008" name="Mol. Immunol.">
        <title>Dock10, a novel CZH protein selectively induced by interleukin-4 in human B lymphocytes.</title>
        <authorList>
            <person name="Yelo E."/>
            <person name="Bernardo M.V."/>
            <person name="Gimeno L."/>
            <person name="Alcaraz-Garcia M.J."/>
            <person name="Majado M.J."/>
            <person name="Parrado A."/>
        </authorList>
    </citation>
    <scope>NUCLEOTIDE SEQUENCE [MRNA] (ISOFORM 3)</scope>
    <scope>INDUCTION</scope>
    <scope>TISSUE SPECIFICITY</scope>
    <scope>SUBCELLULAR LOCATION</scope>
</reference>
<reference key="4">
    <citation type="journal article" date="2011" name="Hum. Immunol.">
        <title>Human and mouse DOCK10 splicing isoforms with alternative first coding exon usage are differentially expressed in T and B lymphocytes.</title>
        <authorList>
            <person name="Alcaraz-Garcia M.J."/>
            <person name="Ruiz-Lafuente N."/>
            <person name="Sebastian-Ruiz S."/>
            <person name="Majado M.J."/>
            <person name="Gonzalez-Garcia C."/>
            <person name="Bernardo M.V."/>
            <person name="Alvarez-Lopez M.R."/>
            <person name="Parrado A."/>
        </authorList>
    </citation>
    <scope>NUCLEOTIDE SEQUENCE [MRNA] (ISOFORM 3)</scope>
    <scope>INDUCTION</scope>
    <scope>TISSUE SPECIFICITY</scope>
</reference>
<reference key="5">
    <citation type="journal article" date="2005" name="Nature">
        <title>Generation and annotation of the DNA sequences of human chromosomes 2 and 4.</title>
        <authorList>
            <person name="Hillier L.W."/>
            <person name="Graves T.A."/>
            <person name="Fulton R.S."/>
            <person name="Fulton L.A."/>
            <person name="Pepin K.H."/>
            <person name="Minx P."/>
            <person name="Wagner-McPherson C."/>
            <person name="Layman D."/>
            <person name="Wylie K."/>
            <person name="Sekhon M."/>
            <person name="Becker M.C."/>
            <person name="Fewell G.A."/>
            <person name="Delehaunty K.D."/>
            <person name="Miner T.L."/>
            <person name="Nash W.E."/>
            <person name="Kremitzki C."/>
            <person name="Oddy L."/>
            <person name="Du H."/>
            <person name="Sun H."/>
            <person name="Bradshaw-Cordum H."/>
            <person name="Ali J."/>
            <person name="Carter J."/>
            <person name="Cordes M."/>
            <person name="Harris A."/>
            <person name="Isak A."/>
            <person name="van Brunt A."/>
            <person name="Nguyen C."/>
            <person name="Du F."/>
            <person name="Courtney L."/>
            <person name="Kalicki J."/>
            <person name="Ozersky P."/>
            <person name="Abbott S."/>
            <person name="Armstrong J."/>
            <person name="Belter E.A."/>
            <person name="Caruso L."/>
            <person name="Cedroni M."/>
            <person name="Cotton M."/>
            <person name="Davidson T."/>
            <person name="Desai A."/>
            <person name="Elliott G."/>
            <person name="Erb T."/>
            <person name="Fronick C."/>
            <person name="Gaige T."/>
            <person name="Haakenson W."/>
            <person name="Haglund K."/>
            <person name="Holmes A."/>
            <person name="Harkins R."/>
            <person name="Kim K."/>
            <person name="Kruchowski S.S."/>
            <person name="Strong C.M."/>
            <person name="Grewal N."/>
            <person name="Goyea E."/>
            <person name="Hou S."/>
            <person name="Levy A."/>
            <person name="Martinka S."/>
            <person name="Mead K."/>
            <person name="McLellan M.D."/>
            <person name="Meyer R."/>
            <person name="Randall-Maher J."/>
            <person name="Tomlinson C."/>
            <person name="Dauphin-Kohlberg S."/>
            <person name="Kozlowicz-Reilly A."/>
            <person name="Shah N."/>
            <person name="Swearengen-Shahid S."/>
            <person name="Snider J."/>
            <person name="Strong J.T."/>
            <person name="Thompson J."/>
            <person name="Yoakum M."/>
            <person name="Leonard S."/>
            <person name="Pearman C."/>
            <person name="Trani L."/>
            <person name="Radionenko M."/>
            <person name="Waligorski J.E."/>
            <person name="Wang C."/>
            <person name="Rock S.M."/>
            <person name="Tin-Wollam A.-M."/>
            <person name="Maupin R."/>
            <person name="Latreille P."/>
            <person name="Wendl M.C."/>
            <person name="Yang S.-P."/>
            <person name="Pohl C."/>
            <person name="Wallis J.W."/>
            <person name="Spieth J."/>
            <person name="Bieri T.A."/>
            <person name="Berkowicz N."/>
            <person name="Nelson J.O."/>
            <person name="Osborne J."/>
            <person name="Ding L."/>
            <person name="Meyer R."/>
            <person name="Sabo A."/>
            <person name="Shotland Y."/>
            <person name="Sinha P."/>
            <person name="Wohldmann P.E."/>
            <person name="Cook L.L."/>
            <person name="Hickenbotham M.T."/>
            <person name="Eldred J."/>
            <person name="Williams D."/>
            <person name="Jones T.A."/>
            <person name="She X."/>
            <person name="Ciccarelli F.D."/>
            <person name="Izaurralde E."/>
            <person name="Taylor J."/>
            <person name="Schmutz J."/>
            <person name="Myers R.M."/>
            <person name="Cox D.R."/>
            <person name="Huang X."/>
            <person name="McPherson J.D."/>
            <person name="Mardis E.R."/>
            <person name="Clifton S.W."/>
            <person name="Warren W.C."/>
            <person name="Chinwalla A.T."/>
            <person name="Eddy S.R."/>
            <person name="Marra M.A."/>
            <person name="Ovcharenko I."/>
            <person name="Furey T.S."/>
            <person name="Miller W."/>
            <person name="Eichler E.E."/>
            <person name="Bork P."/>
            <person name="Suyama M."/>
            <person name="Torrents D."/>
            <person name="Waterston R.H."/>
            <person name="Wilson R.K."/>
        </authorList>
    </citation>
    <scope>NUCLEOTIDE SEQUENCE [LARGE SCALE GENOMIC DNA]</scope>
</reference>
<reference key="6">
    <citation type="journal article" date="2004" name="Genome Res.">
        <title>The status, quality, and expansion of the NIH full-length cDNA project: the Mammalian Gene Collection (MGC).</title>
        <authorList>
            <consortium name="The MGC Project Team"/>
        </authorList>
    </citation>
    <scope>NUCLEOTIDE SEQUENCE [LARGE SCALE MRNA] OF 1599-2186 (ISOFORM 1)</scope>
    <source>
        <tissue>Skin</tissue>
    </source>
</reference>
<reference key="7">
    <citation type="journal article" date="2004" name="Nat. Genet.">
        <title>Complete sequencing and characterization of 21,243 full-length human cDNAs.</title>
        <authorList>
            <person name="Ota T."/>
            <person name="Suzuki Y."/>
            <person name="Nishikawa T."/>
            <person name="Otsuki T."/>
            <person name="Sugiyama T."/>
            <person name="Irie R."/>
            <person name="Wakamatsu A."/>
            <person name="Hayashi K."/>
            <person name="Sato H."/>
            <person name="Nagai K."/>
            <person name="Kimura K."/>
            <person name="Makita H."/>
            <person name="Sekine M."/>
            <person name="Obayashi M."/>
            <person name="Nishi T."/>
            <person name="Shibahara T."/>
            <person name="Tanaka T."/>
            <person name="Ishii S."/>
            <person name="Yamamoto J."/>
            <person name="Saito K."/>
            <person name="Kawai Y."/>
            <person name="Isono Y."/>
            <person name="Nakamura Y."/>
            <person name="Nagahari K."/>
            <person name="Murakami K."/>
            <person name="Yasuda T."/>
            <person name="Iwayanagi T."/>
            <person name="Wagatsuma M."/>
            <person name="Shiratori A."/>
            <person name="Sudo H."/>
            <person name="Hosoiri T."/>
            <person name="Kaku Y."/>
            <person name="Kodaira H."/>
            <person name="Kondo H."/>
            <person name="Sugawara M."/>
            <person name="Takahashi M."/>
            <person name="Kanda K."/>
            <person name="Yokoi T."/>
            <person name="Furuya T."/>
            <person name="Kikkawa E."/>
            <person name="Omura Y."/>
            <person name="Abe K."/>
            <person name="Kamihara K."/>
            <person name="Katsuta N."/>
            <person name="Sato K."/>
            <person name="Tanikawa M."/>
            <person name="Yamazaki M."/>
            <person name="Ninomiya K."/>
            <person name="Ishibashi T."/>
            <person name="Yamashita H."/>
            <person name="Murakawa K."/>
            <person name="Fujimori K."/>
            <person name="Tanai H."/>
            <person name="Kimata M."/>
            <person name="Watanabe M."/>
            <person name="Hiraoka S."/>
            <person name="Chiba Y."/>
            <person name="Ishida S."/>
            <person name="Ono Y."/>
            <person name="Takiguchi S."/>
            <person name="Watanabe S."/>
            <person name="Yosida M."/>
            <person name="Hotuta T."/>
            <person name="Kusano J."/>
            <person name="Kanehori K."/>
            <person name="Takahashi-Fujii A."/>
            <person name="Hara H."/>
            <person name="Tanase T.-O."/>
            <person name="Nomura Y."/>
            <person name="Togiya S."/>
            <person name="Komai F."/>
            <person name="Hara R."/>
            <person name="Takeuchi K."/>
            <person name="Arita M."/>
            <person name="Imose N."/>
            <person name="Musashino K."/>
            <person name="Yuuki H."/>
            <person name="Oshima A."/>
            <person name="Sasaki N."/>
            <person name="Aotsuka S."/>
            <person name="Yoshikawa Y."/>
            <person name="Matsunawa H."/>
            <person name="Ichihara T."/>
            <person name="Shiohata N."/>
            <person name="Sano S."/>
            <person name="Moriya S."/>
            <person name="Momiyama H."/>
            <person name="Satoh N."/>
            <person name="Takami S."/>
            <person name="Terashima Y."/>
            <person name="Suzuki O."/>
            <person name="Nakagawa S."/>
            <person name="Senoh A."/>
            <person name="Mizoguchi H."/>
            <person name="Goto Y."/>
            <person name="Shimizu F."/>
            <person name="Wakebe H."/>
            <person name="Hishigaki H."/>
            <person name="Watanabe T."/>
            <person name="Sugiyama A."/>
            <person name="Takemoto M."/>
            <person name="Kawakami B."/>
            <person name="Yamazaki M."/>
            <person name="Watanabe K."/>
            <person name="Kumagai A."/>
            <person name="Itakura S."/>
            <person name="Fukuzumi Y."/>
            <person name="Fujimori Y."/>
            <person name="Komiyama M."/>
            <person name="Tashiro H."/>
            <person name="Tanigami A."/>
            <person name="Fujiwara T."/>
            <person name="Ono T."/>
            <person name="Yamada K."/>
            <person name="Fujii Y."/>
            <person name="Ozaki K."/>
            <person name="Hirao M."/>
            <person name="Ohmori Y."/>
            <person name="Kawabata A."/>
            <person name="Hikiji T."/>
            <person name="Kobatake N."/>
            <person name="Inagaki H."/>
            <person name="Ikema Y."/>
            <person name="Okamoto S."/>
            <person name="Okitani R."/>
            <person name="Kawakami T."/>
            <person name="Noguchi S."/>
            <person name="Itoh T."/>
            <person name="Shigeta K."/>
            <person name="Senba T."/>
            <person name="Matsumura K."/>
            <person name="Nakajima Y."/>
            <person name="Mizuno T."/>
            <person name="Morinaga M."/>
            <person name="Sasaki M."/>
            <person name="Togashi T."/>
            <person name="Oyama M."/>
            <person name="Hata H."/>
            <person name="Watanabe M."/>
            <person name="Komatsu T."/>
            <person name="Mizushima-Sugano J."/>
            <person name="Satoh T."/>
            <person name="Shirai Y."/>
            <person name="Takahashi Y."/>
            <person name="Nakagawa K."/>
            <person name="Okumura K."/>
            <person name="Nagase T."/>
            <person name="Nomura N."/>
            <person name="Kikuchi H."/>
            <person name="Masuho Y."/>
            <person name="Yamashita R."/>
            <person name="Nakai K."/>
            <person name="Yada T."/>
            <person name="Nakamura Y."/>
            <person name="Ohara O."/>
            <person name="Isogai T."/>
            <person name="Sugano S."/>
        </authorList>
    </citation>
    <scope>NUCLEOTIDE SEQUENCE [LARGE SCALE MRNA] OF 1599-2186 (ISOFORM 1)</scope>
    <source>
        <tissue>Colon mucosa</tissue>
        <tissue>Teratocarcinoma</tissue>
    </source>
</reference>
<reference key="8">
    <citation type="journal article" date="2001" name="Genome Res.">
        <title>Towards a catalog of human genes and proteins: sequencing and analysis of 500 novel complete protein coding human cDNAs.</title>
        <authorList>
            <person name="Wiemann S."/>
            <person name="Weil B."/>
            <person name="Wellenreuther R."/>
            <person name="Gassenhuber J."/>
            <person name="Glassl S."/>
            <person name="Ansorge W."/>
            <person name="Boecher M."/>
            <person name="Bloecker H."/>
            <person name="Bauersachs S."/>
            <person name="Blum H."/>
            <person name="Lauber J."/>
            <person name="Duesterhoeft A."/>
            <person name="Beyer A."/>
            <person name="Koehrer K."/>
            <person name="Strack N."/>
            <person name="Mewes H.-W."/>
            <person name="Ottenwaelder B."/>
            <person name="Obermaier B."/>
            <person name="Tampe J."/>
            <person name="Heubner D."/>
            <person name="Wambutt R."/>
            <person name="Korn B."/>
            <person name="Klein M."/>
            <person name="Poustka A."/>
        </authorList>
    </citation>
    <scope>NUCLEOTIDE SEQUENCE [LARGE SCALE MRNA] OF 977-2186</scope>
    <source>
        <tissue>Bone marrow</tissue>
    </source>
</reference>
<reference key="9">
    <citation type="journal article" date="2002" name="J. Cell Sci.">
        <title>Identification of an evolutionarily conserved superfamily of DOCK180-related proteins with guanine nucleotide exchange activity.</title>
        <authorList>
            <person name="Cote J.-F."/>
            <person name="Vuori K."/>
        </authorList>
    </citation>
    <scope>NOMENCLATURE</scope>
</reference>
<reference key="10">
    <citation type="journal article" date="2006" name="Cell">
        <title>Global, in vivo, and site-specific phosphorylation dynamics in signaling networks.</title>
        <authorList>
            <person name="Olsen J.V."/>
            <person name="Blagoev B."/>
            <person name="Gnad F."/>
            <person name="Macek B."/>
            <person name="Kumar C."/>
            <person name="Mortensen P."/>
            <person name="Mann M."/>
        </authorList>
    </citation>
    <scope>PHOSPHORYLATION [LARGE SCALE ANALYSIS] AT SER-1292; SER-1295 AND SER-1318</scope>
    <scope>IDENTIFICATION BY MASS SPECTROMETRY [LARGE SCALE ANALYSIS]</scope>
    <source>
        <tissue>Cervix carcinoma</tissue>
    </source>
</reference>
<reference key="11">
    <citation type="journal article" date="2008" name="J. Proteome Res.">
        <title>Phosphoproteome of resting human platelets.</title>
        <authorList>
            <person name="Zahedi R.P."/>
            <person name="Lewandrowski U."/>
            <person name="Wiesner J."/>
            <person name="Wortelkamp S."/>
            <person name="Moebius J."/>
            <person name="Schuetz C."/>
            <person name="Walter U."/>
            <person name="Gambaryan S."/>
            <person name="Sickmann A."/>
        </authorList>
    </citation>
    <scope>PHOSPHORYLATION [LARGE SCALE ANALYSIS] AT SER-1292 AND SER-1295</scope>
    <scope>IDENTIFICATION BY MASS SPECTROMETRY [LARGE SCALE ANALYSIS]</scope>
    <source>
        <tissue>Platelet</tissue>
    </source>
</reference>
<reference key="12">
    <citation type="journal article" date="2009" name="Sci. Signal.">
        <title>Quantitative phosphoproteomic analysis of T cell receptor signaling reveals system-wide modulation of protein-protein interactions.</title>
        <authorList>
            <person name="Mayya V."/>
            <person name="Lundgren D.H."/>
            <person name="Hwang S.-I."/>
            <person name="Rezaul K."/>
            <person name="Wu L."/>
            <person name="Eng J.K."/>
            <person name="Rodionov V."/>
            <person name="Han D.K."/>
        </authorList>
    </citation>
    <scope>PHOSPHORYLATION [LARGE SCALE ANALYSIS] AT SER-1232; SER-1292; SER-1295; SER-1318 AND THR-1440</scope>
    <scope>IDENTIFICATION BY MASS SPECTROMETRY [LARGE SCALE ANALYSIS]</scope>
    <source>
        <tissue>Leukemic T-cell</tissue>
    </source>
</reference>
<reference key="13">
    <citation type="journal article" date="2009" name="Science">
        <title>Lysine acetylation targets protein complexes and co-regulates major cellular functions.</title>
        <authorList>
            <person name="Choudhary C."/>
            <person name="Kumar C."/>
            <person name="Gnad F."/>
            <person name="Nielsen M.L."/>
            <person name="Rehman M."/>
            <person name="Walther T.C."/>
            <person name="Olsen J.V."/>
            <person name="Mann M."/>
        </authorList>
    </citation>
    <scope>ACETYLATION [LARGE SCALE ANALYSIS] AT LYS-834</scope>
    <scope>IDENTIFICATION BY MASS SPECTROMETRY [LARGE SCALE ANALYSIS]</scope>
</reference>
<reference key="14">
    <citation type="journal article" date="2011" name="BMC Syst. Biol.">
        <title>Initial characterization of the human central proteome.</title>
        <authorList>
            <person name="Burkard T.R."/>
            <person name="Planyavsky M."/>
            <person name="Kaupe I."/>
            <person name="Breitwieser F.P."/>
            <person name="Buerckstuemmer T."/>
            <person name="Bennett K.L."/>
            <person name="Superti-Furga G."/>
            <person name="Colinge J."/>
        </authorList>
    </citation>
    <scope>IDENTIFICATION BY MASS SPECTROMETRY [LARGE SCALE ANALYSIS]</scope>
</reference>
<feature type="chain" id="PRO_0000190002" description="Dedicator of cytokinesis protein 10">
    <location>
        <begin position="1"/>
        <end position="2186"/>
    </location>
</feature>
<feature type="domain" description="PH" evidence="2">
    <location>
        <begin position="181"/>
        <end position="290"/>
    </location>
</feature>
<feature type="domain" description="C2 DOCK-type" evidence="3">
    <location>
        <begin position="672"/>
        <end position="850"/>
    </location>
</feature>
<feature type="domain" description="DOCKER" evidence="4">
    <location>
        <begin position="1690"/>
        <end position="2150"/>
    </location>
</feature>
<feature type="region of interest" description="Disordered" evidence="5">
    <location>
        <begin position="158"/>
        <end position="177"/>
    </location>
</feature>
<feature type="region of interest" description="Disordered" evidence="5">
    <location>
        <begin position="1290"/>
        <end position="1313"/>
    </location>
</feature>
<feature type="compositionally biased region" description="Basic and acidic residues" evidence="5">
    <location>
        <begin position="1302"/>
        <end position="1313"/>
    </location>
</feature>
<feature type="modified residue" description="Phosphothreonine" evidence="1">
    <location>
        <position position="196"/>
    </location>
</feature>
<feature type="modified residue" description="Phosphoserine" evidence="1">
    <location>
        <position position="302"/>
    </location>
</feature>
<feature type="modified residue" description="Phosphothreonine" evidence="1">
    <location>
        <position position="368"/>
    </location>
</feature>
<feature type="modified residue" description="N6-acetyllysine" evidence="15">
    <location>
        <position position="834"/>
    </location>
</feature>
<feature type="modified residue" description="Phosphoserine" evidence="1">
    <location>
        <position position="877"/>
    </location>
</feature>
<feature type="modified residue" description="Phosphoserine" evidence="16">
    <location>
        <position position="1232"/>
    </location>
</feature>
<feature type="modified residue" description="Phosphoserine" evidence="1">
    <location>
        <position position="1257"/>
    </location>
</feature>
<feature type="modified residue" description="Phosphoserine" evidence="13 14 16">
    <location>
        <position position="1292"/>
    </location>
</feature>
<feature type="modified residue" description="Phosphoserine" evidence="13 14 16">
    <location>
        <position position="1295"/>
    </location>
</feature>
<feature type="modified residue" description="Phosphoserine" evidence="13 16">
    <location>
        <position position="1318"/>
    </location>
</feature>
<feature type="modified residue" description="Phosphothreonine" evidence="1">
    <location>
        <position position="1406"/>
    </location>
</feature>
<feature type="modified residue" description="Phosphothreonine" evidence="16">
    <location>
        <position position="1440"/>
    </location>
</feature>
<feature type="splice variant" id="VSP_047731" description="In isoform 3." evidence="9">
    <original>MAGERTRRFTRSLLRPGQAAELRHSAASAAAVAVSSRQQQR</original>
    <variation>MSFRGKVFKREPSEFWKKRRTVRRVNQEEIHRFSS</variation>
    <location>
        <begin position="1"/>
        <end position="41"/>
    </location>
</feature>
<feature type="splice variant" id="VSP_007716" description="In isoform 2." evidence="10">
    <original>FKDNQGNVDRDSRFSPLFRQESSKISTED</original>
    <variation>DSCSQQTRNTFNGGIGSFSFERFCVAYYF</variation>
    <location>
        <begin position="565"/>
        <end position="593"/>
    </location>
</feature>
<feature type="splice variant" id="VSP_007717" description="In isoform 2." evidence="10">
    <location>
        <begin position="594"/>
        <end position="2186"/>
    </location>
</feature>
<feature type="sequence conflict" description="In Ref. 1; BAA31669." evidence="11" ref="1">
    <original>S</original>
    <variation>Y</variation>
    <location>
        <position position="563"/>
    </location>
</feature>
<feature type="sequence conflict" description="In Ref. 7; BAA91583." evidence="11" ref="7">
    <original>N</original>
    <variation>D</variation>
    <location>
        <position position="1833"/>
    </location>
</feature>
<feature type="sequence conflict" description="In Ref. 7; BAA91022." evidence="11" ref="7">
    <original>T</original>
    <variation>S</variation>
    <location>
        <position position="1966"/>
    </location>
</feature>
<feature type="sequence conflict" description="In Ref. 8; CAH18316." evidence="11" ref="8">
    <original>Q</original>
    <variation>R</variation>
    <location>
        <position position="2062"/>
    </location>
</feature>
<feature type="sequence conflict" description="In Ref. 8; CAH18316." evidence="11" ref="8">
    <original>Q</original>
    <variation>R</variation>
    <location>
        <position position="2093"/>
    </location>
</feature>
<feature type="helix" evidence="17">
    <location>
        <begin position="1696"/>
        <end position="1713"/>
    </location>
</feature>
<feature type="helix" evidence="17">
    <location>
        <begin position="1716"/>
        <end position="1736"/>
    </location>
</feature>
<feature type="helix" evidence="17">
    <location>
        <begin position="1773"/>
        <end position="1775"/>
    </location>
</feature>
<feature type="helix" evidence="17">
    <location>
        <begin position="1777"/>
        <end position="1780"/>
    </location>
</feature>
<feature type="turn" evidence="17">
    <location>
        <begin position="1781"/>
        <end position="1783"/>
    </location>
</feature>
<feature type="helix" evidence="17">
    <location>
        <begin position="1785"/>
        <end position="1791"/>
    </location>
</feature>
<feature type="helix" evidence="17">
    <location>
        <begin position="1806"/>
        <end position="1822"/>
    </location>
</feature>
<feature type="helix" evidence="17">
    <location>
        <begin position="1826"/>
        <end position="1828"/>
    </location>
</feature>
<feature type="helix" evidence="17">
    <location>
        <begin position="1829"/>
        <end position="1843"/>
    </location>
</feature>
<feature type="helix" evidence="17">
    <location>
        <begin position="1846"/>
        <end position="1864"/>
    </location>
</feature>
<feature type="turn" evidence="17">
    <location>
        <begin position="1865"/>
        <end position="1868"/>
    </location>
</feature>
<feature type="strand" evidence="17">
    <location>
        <begin position="1876"/>
        <end position="1883"/>
    </location>
</feature>
<feature type="turn" evidence="17">
    <location>
        <begin position="1885"/>
        <end position="1887"/>
    </location>
</feature>
<feature type="turn" evidence="17">
    <location>
        <begin position="1890"/>
        <end position="1893"/>
    </location>
</feature>
<feature type="strand" evidence="17">
    <location>
        <begin position="1895"/>
        <end position="1901"/>
    </location>
</feature>
<feature type="helix" evidence="17">
    <location>
        <begin position="1906"/>
        <end position="1921"/>
    </location>
</feature>
<feature type="helix" evidence="17">
    <location>
        <begin position="1923"/>
        <end position="1925"/>
    </location>
</feature>
<feature type="strand" evidence="17">
    <location>
        <begin position="1926"/>
        <end position="1929"/>
    </location>
</feature>
<feature type="helix" evidence="17">
    <location>
        <begin position="1937"/>
        <end position="1939"/>
    </location>
</feature>
<feature type="strand" evidence="17">
    <location>
        <begin position="1944"/>
        <end position="1954"/>
    </location>
</feature>
<feature type="helix" evidence="17">
    <location>
        <begin position="1958"/>
        <end position="1961"/>
    </location>
</feature>
<feature type="turn" evidence="17">
    <location>
        <begin position="1967"/>
        <end position="1970"/>
    </location>
</feature>
<feature type="strand" evidence="17">
    <location>
        <begin position="1971"/>
        <end position="1983"/>
    </location>
</feature>
<feature type="strand" evidence="17">
    <location>
        <begin position="1985"/>
        <end position="1987"/>
    </location>
</feature>
<feature type="turn" evidence="17">
    <location>
        <begin position="1993"/>
        <end position="1995"/>
    </location>
</feature>
<feature type="strand" evidence="17">
    <location>
        <begin position="1997"/>
        <end position="2010"/>
    </location>
</feature>
<feature type="strand" evidence="17">
    <location>
        <begin position="2012"/>
        <end position="2026"/>
    </location>
</feature>
<feature type="helix" evidence="17">
    <location>
        <begin position="2028"/>
        <end position="2048"/>
    </location>
</feature>
<feature type="strand" evidence="17">
    <location>
        <begin position="2049"/>
        <end position="2051"/>
    </location>
</feature>
<feature type="helix" evidence="17">
    <location>
        <begin position="2054"/>
        <end position="2065"/>
    </location>
</feature>
<feature type="helix" evidence="17">
    <location>
        <begin position="2074"/>
        <end position="2080"/>
    </location>
</feature>
<feature type="helix" evidence="17">
    <location>
        <begin position="2083"/>
        <end position="2086"/>
    </location>
</feature>
<feature type="helix" evidence="17">
    <location>
        <begin position="2091"/>
        <end position="2116"/>
    </location>
</feature>
<feature type="helix" evidence="17">
    <location>
        <begin position="2121"/>
        <end position="2123"/>
    </location>
</feature>
<feature type="helix" evidence="17">
    <location>
        <begin position="2124"/>
        <end position="2145"/>
    </location>
</feature>
<evidence type="ECO:0000250" key="1">
    <source>
        <dbReference type="UniProtKB" id="Q8BZN6"/>
    </source>
</evidence>
<evidence type="ECO:0000255" key="2">
    <source>
        <dbReference type="PROSITE-ProRule" id="PRU00145"/>
    </source>
</evidence>
<evidence type="ECO:0000255" key="3">
    <source>
        <dbReference type="PROSITE-ProRule" id="PRU00983"/>
    </source>
</evidence>
<evidence type="ECO:0000255" key="4">
    <source>
        <dbReference type="PROSITE-ProRule" id="PRU00984"/>
    </source>
</evidence>
<evidence type="ECO:0000256" key="5">
    <source>
        <dbReference type="SAM" id="MobiDB-lite"/>
    </source>
</evidence>
<evidence type="ECO:0000269" key="6">
    <source>
    </source>
</evidence>
<evidence type="ECO:0000269" key="7">
    <source>
    </source>
</evidence>
<evidence type="ECO:0000269" key="8">
    <source>
    </source>
</evidence>
<evidence type="ECO:0000303" key="9">
    <source>
    </source>
</evidence>
<evidence type="ECO:0000303" key="10">
    <source>
    </source>
</evidence>
<evidence type="ECO:0000305" key="11"/>
<evidence type="ECO:0000312" key="12">
    <source>
        <dbReference type="HGNC" id="HGNC:23479"/>
    </source>
</evidence>
<evidence type="ECO:0007744" key="13">
    <source>
    </source>
</evidence>
<evidence type="ECO:0007744" key="14">
    <source>
    </source>
</evidence>
<evidence type="ECO:0007744" key="15">
    <source>
    </source>
</evidence>
<evidence type="ECO:0007744" key="16">
    <source>
    </source>
</evidence>
<evidence type="ECO:0007829" key="17">
    <source>
        <dbReference type="PDB" id="6TKY"/>
    </source>
</evidence>
<sequence>MAGERTRRFTRSLLRPGQAAELRHSAASAAAVAVSSRQQQRQEKPRLLEPLDYETVIEELEKTYRNDPLQDLLFFPSDDFSAATVSWDIRTLYSTVPEDAEHKAENLLVKEACKFYSSQWHVVNYKYEQYSGDIRQLPRAEYKPEKLPSHSFEIDHEDADKDEDTTSHSSSKGGGGAGGTGVFKSGWLYKGNFNSTVNNTVTVRSFKKRYFQLTQLPDNSYIMNFYKDEKISKEPKGCIFLDSCTGVVQNNRLRKYAFELKMNDLTYFVLAAETESDMDEWIHTLNRILQISPEGPLQGRRSTELTDLGLDSLDNSVTCECTPEETDSSENNLHADFAKYLTETEDTVKTTRNMERLNLFSLDPDIDTLKLQKKDLLEPESVIKPFEEKAAKRIMIICKALNSNLQGCVTENENDPITNIEPFFVSVALYDLRDSRKISADFHVDLNHAAVRQMLLGASVALENGNIDTITPRQSEEPHIKGLPEEWLKFPKQAVFSVSNPHSEIVLVAKIEKVLMGNIASGAEPYIKNPDSNKYAQKILKSNRQFCSKLGKYRMPFAWAVRSVFKDNQGNVDRDSRFSPLFRQESSKISTEDLVKLVSDYRRADRISKMQTIPGSLDIAVDNVPLEHPNCVTSSFIPVKPFNMMAQTEPTVEVEEFVYDSTKYCRPYRVYKNQIYIYPKHLKYDSQKCFNKARNITVCIEFKNSDEESAKPLKCIYGKPGGPLFTSAAYTAVLHHSQNPDFSDEVKIELPTQLHEKHHILFSFYHVTCDINAKANAKKKEALETSVGYAWLPLMKHDQIASQEYNIPIATSLPPNYLSFQDSASGKHGGSDIKWVDGGKPLFKVSTFVVSTVNTQDPHVNAFFQECQKREKDMSQSPTSNFIRSCKNLLNVEKIHAIMSFLPIILNQLFKVLVQNEEDEITTTVTRVLTDIVAKCHEEQLDHSVQSYIKFVFKTRACKERTVHEELAKNVTGLLKSNDSTTVKHVLKHSWFFFAIILKSMAQHLIDTNKIQLPRPQRFPESYQNELDNLVMVLSDHVIWKYKDALEETRRANHSVARFLKRCFTFMDRGYVFKMVNNYISMFSSGDLKTLCQYKFDFLQEVCQHEHFIPLCLPIRSANIPDPLTPSESTQELHASDMPEYSVTNEFCRKHFLIGILLREVGFALQEDQDVRHLALAVLKNLMAKHSFDDRYREPRKQAQIASLYMPLYGMLLDNMPRIYLKDLYPFTVNTSNQGSRDDLSTNGGFQSQTAIKHANSVDTSFSKDVLNSIAAFSSIAISTVNHADSRASLASLDSNPSTNEKSSEKTDNCEKIPRPLSLIGSTLRFDKLDQAETRSLLMCFLHIMKTISYETLIAYWQRAPSPEVSDFFSILDVCLQNFRYLGKRNIIRKIAAAFKFVQSTQNNGTLKGSNPSCQTSGLLSQWMHSTSSHEGHKQHRSQTLPIIRGKNALSNPKLLQMLDNTMTSNSNEIDIVHHVDTEANIATEVCLTILDLLSLFTQTHQRQLQQCDCQNSLMKRVFDTYMLFFQVNQSATALKHVFASLRLFVCKFPSAFFQGPADLCGSFCYEVLKCCNHRSRSTQTEASALLYFFMRKNFEFNKQKSIVRSHLQLIKAVSQLIADAGIGGSRFQHSLAITNNFANGDKQMKNSNFPAEVKDLTKRIRTVLMATAQMKEHEKDPEMLVDLQYSLANSYASTPELRRTWLESMAKIHARNGDLSEAAMCYIHIAALIAEYLKRKGYWKVEKICTASLLSEDTHPCDSNSLLTTPSGGSMFSMGWPAFLSITPNIKEEGAMKEDSGMQDTPYNENILVEQLYMCVEFLWKSERYELIADVNKPIIAVFEKQRDFKKLSDLYYDIHRSYLKVAEVVNSEKRLFGRYYRVAFYGQGFFEEEEGKEYIYKEPKLTGLSEISQRLLKLYADKFGADNVKIIQDSNKVNPKDLDPKYAYIQVTYVTPFFEEKEIEDRKTDFEMHHNINRFVFETPFTLSGKKHGGVAEQCKRRTILTTSHLFPYVKKRIQVISQSSTELNPIEVAIDEMSKKVSELNQLCTMEEVDMIRLQLKLQGSVSVKVNAGPMAYARAFLEETNAKKYPDNQVKLLKEIFRQFADACGQALDVNERLIKEDQLEYQEELRSHYKDMLSELSTVMNEQITGRDDLSKRGVDQTCTRVISKATPALPTVSISSSAEV</sequence>
<gene>
    <name evidence="12" type="primary">DOCK10</name>
    <name type="synonym">KIAA0694</name>
    <name type="synonym">ZIZ3</name>
</gene>
<keyword id="KW-0002">3D-structure</keyword>
<keyword id="KW-0007">Acetylation</keyword>
<keyword id="KW-0025">Alternative splicing</keyword>
<keyword id="KW-0966">Cell projection</keyword>
<keyword id="KW-0963">Cytoplasm</keyword>
<keyword id="KW-0344">Guanine-nucleotide releasing factor</keyword>
<keyword id="KW-0539">Nucleus</keyword>
<keyword id="KW-0597">Phosphoprotein</keyword>
<keyword id="KW-1267">Proteomics identification</keyword>
<keyword id="KW-1185">Reference proteome</keyword>
<keyword id="KW-0770">Synapse</keyword>
<organism>
    <name type="scientific">Homo sapiens</name>
    <name type="common">Human</name>
    <dbReference type="NCBI Taxonomy" id="9606"/>
    <lineage>
        <taxon>Eukaryota</taxon>
        <taxon>Metazoa</taxon>
        <taxon>Chordata</taxon>
        <taxon>Craniata</taxon>
        <taxon>Vertebrata</taxon>
        <taxon>Euteleostomi</taxon>
        <taxon>Mammalia</taxon>
        <taxon>Eutheria</taxon>
        <taxon>Euarchontoglires</taxon>
        <taxon>Primates</taxon>
        <taxon>Haplorrhini</taxon>
        <taxon>Catarrhini</taxon>
        <taxon>Hominidae</taxon>
        <taxon>Homo</taxon>
    </lineage>
</organism>
<name>DOC10_HUMAN</name>
<comment type="function">
    <text evidence="1">Guanine nucleotide-exchange factor (GEF) that activates CDC42 and RAC1 by exchanging bound GDP for free GTP. Essential for dendritic spine morphogenesis in Purkinje cells and in hippocampal neurons, via a CDC42-mediated pathway. Sustains B-cell lymphopoiesis in secondary lymphoid tissues and regulates FCER2/CD23 expression.</text>
</comment>
<comment type="interaction">
    <interactant intactId="EBI-748520">
        <id>Q96BY6</id>
    </interactant>
    <interactant intactId="EBI-10171570">
        <id>Q68D86</id>
        <label>CCDC102B</label>
    </interactant>
    <organismsDiffer>false</organismsDiffer>
    <experiments>3</experiments>
</comment>
<comment type="interaction">
    <interactant intactId="EBI-748520">
        <id>Q96BY6</id>
    </interactant>
    <interactant intactId="EBI-739552">
        <id>P43364</id>
        <label>MAGEA11</label>
    </interactant>
    <organismsDiffer>false</organismsDiffer>
    <experiments>3</experiments>
</comment>
<comment type="interaction">
    <interactant intactId="EBI-748520">
        <id>Q96BY6</id>
    </interactant>
    <interactant intactId="EBI-5280197">
        <id>O75400-2</id>
        <label>PRPF40A</label>
    </interactant>
    <organismsDiffer>false</organismsDiffer>
    <experiments>3</experiments>
</comment>
<comment type="interaction">
    <interactant intactId="EBI-748520">
        <id>Q96BY6</id>
    </interactant>
    <interactant intactId="EBI-2623095">
        <id>Q9Y371</id>
        <label>SH3GLB1</label>
    </interactant>
    <organismsDiffer>false</organismsDiffer>
    <experiments>3</experiments>
</comment>
<comment type="interaction">
    <interactant intactId="EBI-10282566">
        <id>Q96BY6-3</id>
    </interactant>
    <interactant intactId="EBI-10178634">
        <id>P43364-2</id>
        <label>MAGEA11</label>
    </interactant>
    <organismsDiffer>false</organismsDiffer>
    <experiments>3</experiments>
</comment>
<comment type="subcellular location">
    <subcellularLocation>
        <location evidence="6">Nucleus</location>
    </subcellularLocation>
    <subcellularLocation>
        <location evidence="6">Cytoplasm</location>
    </subcellularLocation>
    <subcellularLocation>
        <location evidence="1">Cell projection</location>
        <location evidence="1">Dendritic spine</location>
    </subcellularLocation>
</comment>
<comment type="alternative products">
    <event type="alternative splicing"/>
    <isoform>
        <id>Q96BY6-1</id>
        <name>1</name>
        <name>DOCK10.1</name>
        <sequence type="displayed"/>
    </isoform>
    <isoform>
        <id>Q96BY6-2</id>
        <name>2</name>
        <sequence type="described" ref="VSP_007716 VSP_007717"/>
    </isoform>
    <isoform>
        <id>Q96BY6-3</id>
        <name>3</name>
        <name>DOCK10.2</name>
        <sequence type="described" ref="VSP_047731"/>
    </isoform>
</comment>
<comment type="tissue specificity">
    <text evidence="6 7 8">Expressed at low level in brain and lung. Isoform 1 is enriched in normal T-cells, isoform 3 is enriched in normal B-cells and chronic lymphocytic leukemia (CLL) B-cells.</text>
</comment>
<comment type="induction">
    <text evidence="6 7">Isoforms 1 and 2 are up-regulated in response to IL4 in B-cells but not T-cells.</text>
</comment>
<comment type="domain">
    <text evidence="1">The DOCKER domain may mediate some GEF activity.</text>
</comment>
<comment type="miscellaneous">
    <text evidence="11">'Zizim' means 'spike' in Hebrew.</text>
</comment>
<comment type="similarity">
    <text evidence="3">Belongs to the DOCK family.</text>
</comment>
<comment type="sequence caution" evidence="11">
    <conflict type="erroneous initiation">
        <sequence resource="EMBL-CDS" id="AAH15018"/>
    </conflict>
    <text>Truncated N-terminus.</text>
</comment>
<comment type="sequence caution" evidence="11">
    <conflict type="erroneous initiation">
        <sequence resource="EMBL-CDS" id="BAA31669"/>
    </conflict>
    <text>Extended N-terminus.</text>
</comment>
<comment type="sequence caution" evidence="11">
    <conflict type="frameshift">
        <sequence resource="EMBL-CDS" id="BAA91022"/>
    </conflict>
</comment>
<comment type="sequence caution" evidence="11">
    <conflict type="erroneous initiation">
        <sequence resource="EMBL-CDS" id="BAA91583"/>
    </conflict>
    <text>Truncated N-terminus.</text>
</comment>
<comment type="sequence caution" evidence="11">
    <conflict type="erroneous initiation">
        <sequence resource="EMBL-CDS" id="CAH18316"/>
    </conflict>
    <text>Truncated N-terminus.</text>
</comment>